<protein>
    <recommendedName>
        <fullName evidence="1">UDP-N-acetylmuramate--L-alanine ligase</fullName>
        <ecNumber evidence="1">6.3.2.8</ecNumber>
    </recommendedName>
    <alternativeName>
        <fullName evidence="1">UDP-N-acetylmuramoyl-L-alanine synthetase</fullName>
    </alternativeName>
</protein>
<feature type="chain" id="PRO_1000192100" description="UDP-N-acetylmuramate--L-alanine ligase">
    <location>
        <begin position="1"/>
        <end position="471"/>
    </location>
</feature>
<feature type="binding site" evidence="1">
    <location>
        <begin position="114"/>
        <end position="120"/>
    </location>
    <ligand>
        <name>ATP</name>
        <dbReference type="ChEBI" id="CHEBI:30616"/>
    </ligand>
</feature>
<gene>
    <name evidence="1" type="primary">murC</name>
    <name type="ordered locus">Mnod_7442</name>
</gene>
<proteinExistence type="inferred from homology"/>
<comment type="function">
    <text evidence="1">Cell wall formation.</text>
</comment>
<comment type="catalytic activity">
    <reaction evidence="1">
        <text>UDP-N-acetyl-alpha-D-muramate + L-alanine + ATP = UDP-N-acetyl-alpha-D-muramoyl-L-alanine + ADP + phosphate + H(+)</text>
        <dbReference type="Rhea" id="RHEA:23372"/>
        <dbReference type="ChEBI" id="CHEBI:15378"/>
        <dbReference type="ChEBI" id="CHEBI:30616"/>
        <dbReference type="ChEBI" id="CHEBI:43474"/>
        <dbReference type="ChEBI" id="CHEBI:57972"/>
        <dbReference type="ChEBI" id="CHEBI:70757"/>
        <dbReference type="ChEBI" id="CHEBI:83898"/>
        <dbReference type="ChEBI" id="CHEBI:456216"/>
        <dbReference type="EC" id="6.3.2.8"/>
    </reaction>
</comment>
<comment type="pathway">
    <text evidence="1">Cell wall biogenesis; peptidoglycan biosynthesis.</text>
</comment>
<comment type="subcellular location">
    <subcellularLocation>
        <location evidence="1">Cytoplasm</location>
    </subcellularLocation>
</comment>
<comment type="similarity">
    <text evidence="1">Belongs to the MurCDEF family.</text>
</comment>
<dbReference type="EC" id="6.3.2.8" evidence="1"/>
<dbReference type="EMBL" id="CP001349">
    <property type="protein sequence ID" value="ACL62179.1"/>
    <property type="molecule type" value="Genomic_DNA"/>
</dbReference>
<dbReference type="RefSeq" id="WP_015933737.1">
    <property type="nucleotide sequence ID" value="NC_011894.1"/>
</dbReference>
<dbReference type="SMR" id="B8IN63"/>
<dbReference type="STRING" id="460265.Mnod_7442"/>
<dbReference type="KEGG" id="mno:Mnod_7442"/>
<dbReference type="eggNOG" id="COG0773">
    <property type="taxonomic scope" value="Bacteria"/>
</dbReference>
<dbReference type="HOGENOM" id="CLU_028104_2_2_5"/>
<dbReference type="OrthoDB" id="9804126at2"/>
<dbReference type="UniPathway" id="UPA00219"/>
<dbReference type="Proteomes" id="UP000008207">
    <property type="component" value="Chromosome"/>
</dbReference>
<dbReference type="GO" id="GO:0005737">
    <property type="term" value="C:cytoplasm"/>
    <property type="evidence" value="ECO:0007669"/>
    <property type="project" value="UniProtKB-SubCell"/>
</dbReference>
<dbReference type="GO" id="GO:0005524">
    <property type="term" value="F:ATP binding"/>
    <property type="evidence" value="ECO:0007669"/>
    <property type="project" value="UniProtKB-UniRule"/>
</dbReference>
<dbReference type="GO" id="GO:0008763">
    <property type="term" value="F:UDP-N-acetylmuramate-L-alanine ligase activity"/>
    <property type="evidence" value="ECO:0007669"/>
    <property type="project" value="UniProtKB-UniRule"/>
</dbReference>
<dbReference type="GO" id="GO:0051301">
    <property type="term" value="P:cell division"/>
    <property type="evidence" value="ECO:0007669"/>
    <property type="project" value="UniProtKB-KW"/>
</dbReference>
<dbReference type="GO" id="GO:0071555">
    <property type="term" value="P:cell wall organization"/>
    <property type="evidence" value="ECO:0007669"/>
    <property type="project" value="UniProtKB-KW"/>
</dbReference>
<dbReference type="GO" id="GO:0009252">
    <property type="term" value="P:peptidoglycan biosynthetic process"/>
    <property type="evidence" value="ECO:0007669"/>
    <property type="project" value="UniProtKB-UniRule"/>
</dbReference>
<dbReference type="GO" id="GO:0008360">
    <property type="term" value="P:regulation of cell shape"/>
    <property type="evidence" value="ECO:0007669"/>
    <property type="project" value="UniProtKB-KW"/>
</dbReference>
<dbReference type="Gene3D" id="3.90.190.20">
    <property type="entry name" value="Mur ligase, C-terminal domain"/>
    <property type="match status" value="1"/>
</dbReference>
<dbReference type="Gene3D" id="3.40.1190.10">
    <property type="entry name" value="Mur-like, catalytic domain"/>
    <property type="match status" value="1"/>
</dbReference>
<dbReference type="Gene3D" id="3.40.50.720">
    <property type="entry name" value="NAD(P)-binding Rossmann-like Domain"/>
    <property type="match status" value="1"/>
</dbReference>
<dbReference type="HAMAP" id="MF_00046">
    <property type="entry name" value="MurC"/>
    <property type="match status" value="1"/>
</dbReference>
<dbReference type="InterPro" id="IPR036565">
    <property type="entry name" value="Mur-like_cat_sf"/>
</dbReference>
<dbReference type="InterPro" id="IPR004101">
    <property type="entry name" value="Mur_ligase_C"/>
</dbReference>
<dbReference type="InterPro" id="IPR036615">
    <property type="entry name" value="Mur_ligase_C_dom_sf"/>
</dbReference>
<dbReference type="InterPro" id="IPR013221">
    <property type="entry name" value="Mur_ligase_cen"/>
</dbReference>
<dbReference type="InterPro" id="IPR000713">
    <property type="entry name" value="Mur_ligase_N"/>
</dbReference>
<dbReference type="InterPro" id="IPR050061">
    <property type="entry name" value="MurCDEF_pg_biosynth"/>
</dbReference>
<dbReference type="InterPro" id="IPR005758">
    <property type="entry name" value="UDP-N-AcMur_Ala_ligase_MurC"/>
</dbReference>
<dbReference type="NCBIfam" id="TIGR01082">
    <property type="entry name" value="murC"/>
    <property type="match status" value="1"/>
</dbReference>
<dbReference type="PANTHER" id="PTHR43445:SF3">
    <property type="entry name" value="UDP-N-ACETYLMURAMATE--L-ALANINE LIGASE"/>
    <property type="match status" value="1"/>
</dbReference>
<dbReference type="PANTHER" id="PTHR43445">
    <property type="entry name" value="UDP-N-ACETYLMURAMATE--L-ALANINE LIGASE-RELATED"/>
    <property type="match status" value="1"/>
</dbReference>
<dbReference type="Pfam" id="PF01225">
    <property type="entry name" value="Mur_ligase"/>
    <property type="match status" value="1"/>
</dbReference>
<dbReference type="Pfam" id="PF02875">
    <property type="entry name" value="Mur_ligase_C"/>
    <property type="match status" value="1"/>
</dbReference>
<dbReference type="Pfam" id="PF08245">
    <property type="entry name" value="Mur_ligase_M"/>
    <property type="match status" value="1"/>
</dbReference>
<dbReference type="SUPFAM" id="SSF51984">
    <property type="entry name" value="MurCD N-terminal domain"/>
    <property type="match status" value="1"/>
</dbReference>
<dbReference type="SUPFAM" id="SSF53623">
    <property type="entry name" value="MurD-like peptide ligases, catalytic domain"/>
    <property type="match status" value="1"/>
</dbReference>
<dbReference type="SUPFAM" id="SSF53244">
    <property type="entry name" value="MurD-like peptide ligases, peptide-binding domain"/>
    <property type="match status" value="1"/>
</dbReference>
<evidence type="ECO:0000255" key="1">
    <source>
        <dbReference type="HAMAP-Rule" id="MF_00046"/>
    </source>
</evidence>
<sequence>MKLPNKLGPIHFIGIGGIGMSGIAEVMHNLGYTVQGSDAADNYNVRRLAEKGIRTFVGHRGENLADAELVVVSTAIRRDNPELALARERRLPVVRRAEMLAELMRFKSCVAVAGTHGKTTTTSLVATLLDAGGLDPTVINGGIINAYGTNARMGEGDWMVVEADESDGTFLKLPADIAIVTNIDPEHLDHFGSFDAIKDAFRAFIDNIPFYGFAVMCIDHPTVQDLVGRIEDRRIVTYGENPQADVRLIDVDLKGGQSRFRVMIRDRRPGFRLEMEDLVLPMPGKHNALNATAALAVAHELGVSPEAIRRALAGFGGVKRRFTRTGEWNGAQIFDDYGHHPVEIKAVLKAARASTEGRVVAVVQPHRYTRLASLFDDFCTCFNDADTVIVAPVYAAGEAPIEGFDRDALVAGLKSRGHRNAVALERSEDLAAMISGLAGPGDYVVCLGAGNITQWAYALPGELAALGEKAA</sequence>
<accession>B8IN63</accession>
<reference key="1">
    <citation type="submission" date="2009-01" db="EMBL/GenBank/DDBJ databases">
        <title>Complete sequence of chromosome of Methylobacterium nodulans ORS 2060.</title>
        <authorList>
            <consortium name="US DOE Joint Genome Institute"/>
            <person name="Lucas S."/>
            <person name="Copeland A."/>
            <person name="Lapidus A."/>
            <person name="Glavina del Rio T."/>
            <person name="Dalin E."/>
            <person name="Tice H."/>
            <person name="Bruce D."/>
            <person name="Goodwin L."/>
            <person name="Pitluck S."/>
            <person name="Sims D."/>
            <person name="Brettin T."/>
            <person name="Detter J.C."/>
            <person name="Han C."/>
            <person name="Larimer F."/>
            <person name="Land M."/>
            <person name="Hauser L."/>
            <person name="Kyrpides N."/>
            <person name="Ivanova N."/>
            <person name="Marx C.J."/>
            <person name="Richardson P."/>
        </authorList>
    </citation>
    <scope>NUCLEOTIDE SEQUENCE [LARGE SCALE GENOMIC DNA]</scope>
    <source>
        <strain>LMG 21967 / CNCM I-2342 / ORS 2060</strain>
    </source>
</reference>
<keyword id="KW-0067">ATP-binding</keyword>
<keyword id="KW-0131">Cell cycle</keyword>
<keyword id="KW-0132">Cell division</keyword>
<keyword id="KW-0133">Cell shape</keyword>
<keyword id="KW-0961">Cell wall biogenesis/degradation</keyword>
<keyword id="KW-0963">Cytoplasm</keyword>
<keyword id="KW-0436">Ligase</keyword>
<keyword id="KW-0547">Nucleotide-binding</keyword>
<keyword id="KW-0573">Peptidoglycan synthesis</keyword>
<keyword id="KW-1185">Reference proteome</keyword>
<organism>
    <name type="scientific">Methylobacterium nodulans (strain LMG 21967 / CNCM I-2342 / ORS 2060)</name>
    <dbReference type="NCBI Taxonomy" id="460265"/>
    <lineage>
        <taxon>Bacteria</taxon>
        <taxon>Pseudomonadati</taxon>
        <taxon>Pseudomonadota</taxon>
        <taxon>Alphaproteobacteria</taxon>
        <taxon>Hyphomicrobiales</taxon>
        <taxon>Methylobacteriaceae</taxon>
        <taxon>Methylobacterium</taxon>
    </lineage>
</organism>
<name>MURC_METNO</name>